<keyword id="KW-0028">Amino-acid biosynthesis</keyword>
<keyword id="KW-0032">Aminotransferase</keyword>
<keyword id="KW-0963">Cytoplasm</keyword>
<keyword id="KW-0663">Pyridoxal phosphate</keyword>
<keyword id="KW-0664">Pyridoxine biosynthesis</keyword>
<keyword id="KW-1185">Reference proteome</keyword>
<keyword id="KW-0718">Serine biosynthesis</keyword>
<keyword id="KW-0808">Transferase</keyword>
<proteinExistence type="inferred from homology"/>
<sequence>MADRVYNFSAGPATLPFEVLEQAGKDIVNFKETGSGLIEISHRSPEFIEVIEKTESLVRELLEVPDNYKVLFLQGGASSQFFMVPMNLLGAGKKATYLNTGTWAKKAIKEAQLFGDIDVAYSSEESIFNHVPANDAYQVAEESEYLYFASNNTIYGTQFETMPQSKKMLVADMSSDIFSRKVDVSKFGLIFAGAQKNLGPAGVTLVIIRDDLLEKTPAHTPTMLSYKTHADKGSMFNTPPCFAIYVMGEVLAWLKNLGGVEKIEEINREKAALLYSQIDASDYYRVHAQDGSRSLMNVTFNLPTAELEAKFIAEASALQMKGLKGHRSIGGCRASIYNAFPREGVVKLVEFMQVFAANNPA</sequence>
<name>SERC_DESPS</name>
<protein>
    <recommendedName>
        <fullName evidence="1">Phosphoserine aminotransferase</fullName>
        <ecNumber evidence="1">2.6.1.52</ecNumber>
    </recommendedName>
    <alternativeName>
        <fullName evidence="1">Phosphohydroxythreonine aminotransferase</fullName>
        <shortName evidence="1">PSAT</shortName>
    </alternativeName>
</protein>
<dbReference type="EC" id="2.6.1.52" evidence="1"/>
<dbReference type="EMBL" id="CR522870">
    <property type="protein sequence ID" value="CAG36662.1"/>
    <property type="molecule type" value="Genomic_DNA"/>
</dbReference>
<dbReference type="RefSeq" id="WP_011189174.1">
    <property type="nucleotide sequence ID" value="NC_006138.1"/>
</dbReference>
<dbReference type="SMR" id="Q6ALW3"/>
<dbReference type="STRING" id="177439.DP1933"/>
<dbReference type="KEGG" id="dps:DP1933"/>
<dbReference type="eggNOG" id="COG1932">
    <property type="taxonomic scope" value="Bacteria"/>
</dbReference>
<dbReference type="HOGENOM" id="CLU_034866_0_2_7"/>
<dbReference type="OrthoDB" id="9809412at2"/>
<dbReference type="UniPathway" id="UPA00135">
    <property type="reaction ID" value="UER00197"/>
</dbReference>
<dbReference type="UniPathway" id="UPA00244">
    <property type="reaction ID" value="UER00311"/>
</dbReference>
<dbReference type="Proteomes" id="UP000000602">
    <property type="component" value="Chromosome"/>
</dbReference>
<dbReference type="GO" id="GO:0005737">
    <property type="term" value="C:cytoplasm"/>
    <property type="evidence" value="ECO:0007669"/>
    <property type="project" value="UniProtKB-SubCell"/>
</dbReference>
<dbReference type="GO" id="GO:0004648">
    <property type="term" value="F:O-phospho-L-serine:2-oxoglutarate aminotransferase activity"/>
    <property type="evidence" value="ECO:0007669"/>
    <property type="project" value="UniProtKB-UniRule"/>
</dbReference>
<dbReference type="GO" id="GO:0030170">
    <property type="term" value="F:pyridoxal phosphate binding"/>
    <property type="evidence" value="ECO:0007669"/>
    <property type="project" value="UniProtKB-UniRule"/>
</dbReference>
<dbReference type="GO" id="GO:0006564">
    <property type="term" value="P:L-serine biosynthetic process"/>
    <property type="evidence" value="ECO:0007669"/>
    <property type="project" value="UniProtKB-UniRule"/>
</dbReference>
<dbReference type="GO" id="GO:0008615">
    <property type="term" value="P:pyridoxine biosynthetic process"/>
    <property type="evidence" value="ECO:0007669"/>
    <property type="project" value="UniProtKB-UniRule"/>
</dbReference>
<dbReference type="FunFam" id="3.40.640.10:FF:000010">
    <property type="entry name" value="Phosphoserine aminotransferase"/>
    <property type="match status" value="1"/>
</dbReference>
<dbReference type="FunFam" id="3.90.1150.10:FF:000006">
    <property type="entry name" value="Phosphoserine aminotransferase"/>
    <property type="match status" value="1"/>
</dbReference>
<dbReference type="Gene3D" id="3.90.1150.10">
    <property type="entry name" value="Aspartate Aminotransferase, domain 1"/>
    <property type="match status" value="1"/>
</dbReference>
<dbReference type="Gene3D" id="3.40.640.10">
    <property type="entry name" value="Type I PLP-dependent aspartate aminotransferase-like (Major domain)"/>
    <property type="match status" value="1"/>
</dbReference>
<dbReference type="HAMAP" id="MF_00160">
    <property type="entry name" value="SerC_aminotrans_5"/>
    <property type="match status" value="1"/>
</dbReference>
<dbReference type="InterPro" id="IPR000192">
    <property type="entry name" value="Aminotrans_V_dom"/>
</dbReference>
<dbReference type="InterPro" id="IPR020578">
    <property type="entry name" value="Aminotrans_V_PyrdxlP_BS"/>
</dbReference>
<dbReference type="InterPro" id="IPR022278">
    <property type="entry name" value="Pser_aminoTfrase"/>
</dbReference>
<dbReference type="InterPro" id="IPR015424">
    <property type="entry name" value="PyrdxlP-dep_Trfase"/>
</dbReference>
<dbReference type="InterPro" id="IPR015421">
    <property type="entry name" value="PyrdxlP-dep_Trfase_major"/>
</dbReference>
<dbReference type="InterPro" id="IPR015422">
    <property type="entry name" value="PyrdxlP-dep_Trfase_small"/>
</dbReference>
<dbReference type="NCBIfam" id="NF003764">
    <property type="entry name" value="PRK05355.1"/>
    <property type="match status" value="1"/>
</dbReference>
<dbReference type="NCBIfam" id="TIGR01364">
    <property type="entry name" value="serC_1"/>
    <property type="match status" value="1"/>
</dbReference>
<dbReference type="PANTHER" id="PTHR43247">
    <property type="entry name" value="PHOSPHOSERINE AMINOTRANSFERASE"/>
    <property type="match status" value="1"/>
</dbReference>
<dbReference type="PANTHER" id="PTHR43247:SF1">
    <property type="entry name" value="PHOSPHOSERINE AMINOTRANSFERASE"/>
    <property type="match status" value="1"/>
</dbReference>
<dbReference type="Pfam" id="PF00266">
    <property type="entry name" value="Aminotran_5"/>
    <property type="match status" value="1"/>
</dbReference>
<dbReference type="PIRSF" id="PIRSF000525">
    <property type="entry name" value="SerC"/>
    <property type="match status" value="1"/>
</dbReference>
<dbReference type="SUPFAM" id="SSF53383">
    <property type="entry name" value="PLP-dependent transferases"/>
    <property type="match status" value="1"/>
</dbReference>
<dbReference type="PROSITE" id="PS00595">
    <property type="entry name" value="AA_TRANSFER_CLASS_5"/>
    <property type="match status" value="1"/>
</dbReference>
<organism>
    <name type="scientific">Desulfotalea psychrophila (strain LSv54 / DSM 12343)</name>
    <dbReference type="NCBI Taxonomy" id="177439"/>
    <lineage>
        <taxon>Bacteria</taxon>
        <taxon>Pseudomonadati</taxon>
        <taxon>Thermodesulfobacteriota</taxon>
        <taxon>Desulfobulbia</taxon>
        <taxon>Desulfobulbales</taxon>
        <taxon>Desulfocapsaceae</taxon>
        <taxon>Desulfotalea</taxon>
    </lineage>
</organism>
<accession>Q6ALW3</accession>
<reference key="1">
    <citation type="journal article" date="2004" name="Environ. Microbiol.">
        <title>The genome of Desulfotalea psychrophila, a sulfate-reducing bacterium from permanently cold Arctic sediments.</title>
        <authorList>
            <person name="Rabus R."/>
            <person name="Ruepp A."/>
            <person name="Frickey T."/>
            <person name="Rattei T."/>
            <person name="Fartmann B."/>
            <person name="Stark M."/>
            <person name="Bauer M."/>
            <person name="Zibat A."/>
            <person name="Lombardot T."/>
            <person name="Becker I."/>
            <person name="Amann J."/>
            <person name="Gellner K."/>
            <person name="Teeling H."/>
            <person name="Leuschner W.D."/>
            <person name="Gloeckner F.-O."/>
            <person name="Lupas A.N."/>
            <person name="Amann R."/>
            <person name="Klenk H.-P."/>
        </authorList>
    </citation>
    <scope>NUCLEOTIDE SEQUENCE [LARGE SCALE GENOMIC DNA]</scope>
    <source>
        <strain>DSM 12343 / LSv54</strain>
    </source>
</reference>
<evidence type="ECO:0000255" key="1">
    <source>
        <dbReference type="HAMAP-Rule" id="MF_00160"/>
    </source>
</evidence>
<feature type="chain" id="PRO_0000150166" description="Phosphoserine aminotransferase">
    <location>
        <begin position="1"/>
        <end position="361"/>
    </location>
</feature>
<feature type="binding site" evidence="1">
    <location>
        <position position="43"/>
    </location>
    <ligand>
        <name>L-glutamate</name>
        <dbReference type="ChEBI" id="CHEBI:29985"/>
    </ligand>
</feature>
<feature type="binding site" evidence="1">
    <location>
        <begin position="77"/>
        <end position="78"/>
    </location>
    <ligand>
        <name>pyridoxal 5'-phosphate</name>
        <dbReference type="ChEBI" id="CHEBI:597326"/>
    </ligand>
</feature>
<feature type="binding site" evidence="1">
    <location>
        <position position="103"/>
    </location>
    <ligand>
        <name>pyridoxal 5'-phosphate</name>
        <dbReference type="ChEBI" id="CHEBI:597326"/>
    </ligand>
</feature>
<feature type="binding site" evidence="1">
    <location>
        <position position="153"/>
    </location>
    <ligand>
        <name>pyridoxal 5'-phosphate</name>
        <dbReference type="ChEBI" id="CHEBI:597326"/>
    </ligand>
</feature>
<feature type="binding site" evidence="1">
    <location>
        <position position="172"/>
    </location>
    <ligand>
        <name>pyridoxal 5'-phosphate</name>
        <dbReference type="ChEBI" id="CHEBI:597326"/>
    </ligand>
</feature>
<feature type="binding site" evidence="1">
    <location>
        <position position="195"/>
    </location>
    <ligand>
        <name>pyridoxal 5'-phosphate</name>
        <dbReference type="ChEBI" id="CHEBI:597326"/>
    </ligand>
</feature>
<feature type="binding site" evidence="1">
    <location>
        <begin position="237"/>
        <end position="238"/>
    </location>
    <ligand>
        <name>pyridoxal 5'-phosphate</name>
        <dbReference type="ChEBI" id="CHEBI:597326"/>
    </ligand>
</feature>
<feature type="modified residue" description="N6-(pyridoxal phosphate)lysine" evidence="1">
    <location>
        <position position="196"/>
    </location>
</feature>
<comment type="function">
    <text evidence="1">Catalyzes the reversible conversion of 3-phosphohydroxypyruvate to phosphoserine and of 3-hydroxy-2-oxo-4-phosphonooxybutanoate to phosphohydroxythreonine.</text>
</comment>
<comment type="catalytic activity">
    <reaction evidence="1">
        <text>O-phospho-L-serine + 2-oxoglutarate = 3-phosphooxypyruvate + L-glutamate</text>
        <dbReference type="Rhea" id="RHEA:14329"/>
        <dbReference type="ChEBI" id="CHEBI:16810"/>
        <dbReference type="ChEBI" id="CHEBI:18110"/>
        <dbReference type="ChEBI" id="CHEBI:29985"/>
        <dbReference type="ChEBI" id="CHEBI:57524"/>
        <dbReference type="EC" id="2.6.1.52"/>
    </reaction>
</comment>
<comment type="catalytic activity">
    <reaction evidence="1">
        <text>4-(phosphooxy)-L-threonine + 2-oxoglutarate = (R)-3-hydroxy-2-oxo-4-phosphooxybutanoate + L-glutamate</text>
        <dbReference type="Rhea" id="RHEA:16573"/>
        <dbReference type="ChEBI" id="CHEBI:16810"/>
        <dbReference type="ChEBI" id="CHEBI:29985"/>
        <dbReference type="ChEBI" id="CHEBI:58452"/>
        <dbReference type="ChEBI" id="CHEBI:58538"/>
        <dbReference type="EC" id="2.6.1.52"/>
    </reaction>
</comment>
<comment type="cofactor">
    <cofactor evidence="1">
        <name>pyridoxal 5'-phosphate</name>
        <dbReference type="ChEBI" id="CHEBI:597326"/>
    </cofactor>
    <text evidence="1">Binds 1 pyridoxal phosphate per subunit.</text>
</comment>
<comment type="pathway">
    <text evidence="1">Amino-acid biosynthesis; L-serine biosynthesis; L-serine from 3-phospho-D-glycerate: step 2/3.</text>
</comment>
<comment type="pathway">
    <text evidence="1">Cofactor biosynthesis; pyridoxine 5'-phosphate biosynthesis; pyridoxine 5'-phosphate from D-erythrose 4-phosphate: step 3/5.</text>
</comment>
<comment type="subunit">
    <text evidence="1">Homodimer.</text>
</comment>
<comment type="subcellular location">
    <subcellularLocation>
        <location evidence="1">Cytoplasm</location>
    </subcellularLocation>
</comment>
<comment type="similarity">
    <text evidence="1">Belongs to the class-V pyridoxal-phosphate-dependent aminotransferase family. SerC subfamily.</text>
</comment>
<gene>
    <name evidence="1" type="primary">serC</name>
    <name type="ordered locus">DP1933</name>
</gene>